<feature type="chain" id="PRO_1000081545" description="Small ribosomal subunit protein uS10">
    <location>
        <begin position="1"/>
        <end position="110"/>
    </location>
</feature>
<reference key="1">
    <citation type="journal article" date="2009" name="Infect. Immun.">
        <title>Comparative genomics reveal extensive transposon-mediated genomic plasticity and diversity among potential effector proteins within the genus Coxiella.</title>
        <authorList>
            <person name="Beare P.A."/>
            <person name="Unsworth N."/>
            <person name="Andoh M."/>
            <person name="Voth D.E."/>
            <person name="Omsland A."/>
            <person name="Gilk S.D."/>
            <person name="Williams K.P."/>
            <person name="Sobral B.W."/>
            <person name="Kupko J.J. III"/>
            <person name="Porcella S.F."/>
            <person name="Samuel J.E."/>
            <person name="Heinzen R.A."/>
        </authorList>
    </citation>
    <scope>NUCLEOTIDE SEQUENCE [LARGE SCALE GENOMIC DNA]</scope>
    <source>
        <strain>Dugway 5J108-111</strain>
    </source>
</reference>
<proteinExistence type="inferred from homology"/>
<organism>
    <name type="scientific">Coxiella burnetii (strain Dugway 5J108-111)</name>
    <dbReference type="NCBI Taxonomy" id="434922"/>
    <lineage>
        <taxon>Bacteria</taxon>
        <taxon>Pseudomonadati</taxon>
        <taxon>Pseudomonadota</taxon>
        <taxon>Gammaproteobacteria</taxon>
        <taxon>Legionellales</taxon>
        <taxon>Coxiellaceae</taxon>
        <taxon>Coxiella</taxon>
    </lineage>
</organism>
<keyword id="KW-0687">Ribonucleoprotein</keyword>
<keyword id="KW-0689">Ribosomal protein</keyword>
<accession>A9KD32</accession>
<protein>
    <recommendedName>
        <fullName evidence="1">Small ribosomal subunit protein uS10</fullName>
    </recommendedName>
    <alternativeName>
        <fullName evidence="2">30S ribosomal protein S10</fullName>
    </alternativeName>
</protein>
<comment type="function">
    <text evidence="1">Involved in the binding of tRNA to the ribosomes.</text>
</comment>
<comment type="subunit">
    <text evidence="1">Part of the 30S ribosomal subunit.</text>
</comment>
<comment type="similarity">
    <text evidence="1">Belongs to the universal ribosomal protein uS10 family.</text>
</comment>
<comment type="sequence caution" evidence="2">
    <conflict type="erroneous initiation">
        <sequence resource="EMBL-CDS" id="ABS77673"/>
    </conflict>
</comment>
<gene>
    <name evidence="1" type="primary">rpsJ</name>
    <name type="ordered locus">CBUD_1855</name>
</gene>
<sequence length="110" mass="12592">MSDNQRIRIRLKAFDHRLIDRSTREIVETARRTGAIIRGPILLPTKIERYTVLISPNIDKDARDQYEIRTHKRLVDISEPTDKTVDALMKLDLAAGVDVQIELLNKKSGA</sequence>
<evidence type="ECO:0000255" key="1">
    <source>
        <dbReference type="HAMAP-Rule" id="MF_00508"/>
    </source>
</evidence>
<evidence type="ECO:0000305" key="2"/>
<name>RS10_COXBN</name>
<dbReference type="EMBL" id="CP000733">
    <property type="protein sequence ID" value="ABS77673.2"/>
    <property type="status" value="ALT_INIT"/>
    <property type="molecule type" value="Genomic_DNA"/>
</dbReference>
<dbReference type="RefSeq" id="WP_005771548.1">
    <property type="nucleotide sequence ID" value="NC_009727.1"/>
</dbReference>
<dbReference type="SMR" id="A9KD32"/>
<dbReference type="KEGG" id="cbd:CBUD_1855"/>
<dbReference type="HOGENOM" id="CLU_122625_1_3_6"/>
<dbReference type="Proteomes" id="UP000008555">
    <property type="component" value="Chromosome"/>
</dbReference>
<dbReference type="GO" id="GO:1990904">
    <property type="term" value="C:ribonucleoprotein complex"/>
    <property type="evidence" value="ECO:0007669"/>
    <property type="project" value="UniProtKB-KW"/>
</dbReference>
<dbReference type="GO" id="GO:0005840">
    <property type="term" value="C:ribosome"/>
    <property type="evidence" value="ECO:0007669"/>
    <property type="project" value="UniProtKB-KW"/>
</dbReference>
<dbReference type="GO" id="GO:0003735">
    <property type="term" value="F:structural constituent of ribosome"/>
    <property type="evidence" value="ECO:0007669"/>
    <property type="project" value="InterPro"/>
</dbReference>
<dbReference type="GO" id="GO:0000049">
    <property type="term" value="F:tRNA binding"/>
    <property type="evidence" value="ECO:0007669"/>
    <property type="project" value="UniProtKB-UniRule"/>
</dbReference>
<dbReference type="GO" id="GO:0006412">
    <property type="term" value="P:translation"/>
    <property type="evidence" value="ECO:0007669"/>
    <property type="project" value="UniProtKB-UniRule"/>
</dbReference>
<dbReference type="FunFam" id="3.30.70.600:FF:000001">
    <property type="entry name" value="30S ribosomal protein S10"/>
    <property type="match status" value="1"/>
</dbReference>
<dbReference type="Gene3D" id="3.30.70.600">
    <property type="entry name" value="Ribosomal protein S10 domain"/>
    <property type="match status" value="1"/>
</dbReference>
<dbReference type="HAMAP" id="MF_00508">
    <property type="entry name" value="Ribosomal_uS10"/>
    <property type="match status" value="1"/>
</dbReference>
<dbReference type="InterPro" id="IPR001848">
    <property type="entry name" value="Ribosomal_uS10"/>
</dbReference>
<dbReference type="InterPro" id="IPR018268">
    <property type="entry name" value="Ribosomal_uS10_CS"/>
</dbReference>
<dbReference type="InterPro" id="IPR027486">
    <property type="entry name" value="Ribosomal_uS10_dom"/>
</dbReference>
<dbReference type="InterPro" id="IPR036838">
    <property type="entry name" value="Ribosomal_uS10_dom_sf"/>
</dbReference>
<dbReference type="NCBIfam" id="NF001861">
    <property type="entry name" value="PRK00596.1"/>
    <property type="match status" value="1"/>
</dbReference>
<dbReference type="NCBIfam" id="TIGR01049">
    <property type="entry name" value="rpsJ_bact"/>
    <property type="match status" value="1"/>
</dbReference>
<dbReference type="PANTHER" id="PTHR11700">
    <property type="entry name" value="30S RIBOSOMAL PROTEIN S10 FAMILY MEMBER"/>
    <property type="match status" value="1"/>
</dbReference>
<dbReference type="Pfam" id="PF00338">
    <property type="entry name" value="Ribosomal_S10"/>
    <property type="match status" value="1"/>
</dbReference>
<dbReference type="PRINTS" id="PR00971">
    <property type="entry name" value="RIBOSOMALS10"/>
</dbReference>
<dbReference type="SMART" id="SM01403">
    <property type="entry name" value="Ribosomal_S10"/>
    <property type="match status" value="1"/>
</dbReference>
<dbReference type="SUPFAM" id="SSF54999">
    <property type="entry name" value="Ribosomal protein S10"/>
    <property type="match status" value="1"/>
</dbReference>
<dbReference type="PROSITE" id="PS00361">
    <property type="entry name" value="RIBOSOMAL_S10"/>
    <property type="match status" value="1"/>
</dbReference>